<gene>
    <name evidence="1" type="primary">ispD</name>
    <name type="ordered locus">BPP3366</name>
</gene>
<name>ISPD_BORPA</name>
<evidence type="ECO:0000255" key="1">
    <source>
        <dbReference type="HAMAP-Rule" id="MF_00108"/>
    </source>
</evidence>
<accession>Q7W5C9</accession>
<protein>
    <recommendedName>
        <fullName evidence="1">2-C-methyl-D-erythritol 4-phosphate cytidylyltransferase</fullName>
        <ecNumber evidence="1">2.7.7.60</ecNumber>
    </recommendedName>
    <alternativeName>
        <fullName evidence="1">4-diphosphocytidyl-2C-methyl-D-erythritol synthase</fullName>
    </alternativeName>
    <alternativeName>
        <fullName evidence="1">MEP cytidylyltransferase</fullName>
        <shortName evidence="1">MCT</shortName>
    </alternativeName>
</protein>
<organism>
    <name type="scientific">Bordetella parapertussis (strain 12822 / ATCC BAA-587 / NCTC 13253)</name>
    <dbReference type="NCBI Taxonomy" id="257311"/>
    <lineage>
        <taxon>Bacteria</taxon>
        <taxon>Pseudomonadati</taxon>
        <taxon>Pseudomonadota</taxon>
        <taxon>Betaproteobacteria</taxon>
        <taxon>Burkholderiales</taxon>
        <taxon>Alcaligenaceae</taxon>
        <taxon>Bordetella</taxon>
    </lineage>
</organism>
<comment type="function">
    <text evidence="1">Catalyzes the formation of 4-diphosphocytidyl-2-C-methyl-D-erythritol from CTP and 2-C-methyl-D-erythritol 4-phosphate (MEP).</text>
</comment>
<comment type="catalytic activity">
    <reaction evidence="1">
        <text>2-C-methyl-D-erythritol 4-phosphate + CTP + H(+) = 4-CDP-2-C-methyl-D-erythritol + diphosphate</text>
        <dbReference type="Rhea" id="RHEA:13429"/>
        <dbReference type="ChEBI" id="CHEBI:15378"/>
        <dbReference type="ChEBI" id="CHEBI:33019"/>
        <dbReference type="ChEBI" id="CHEBI:37563"/>
        <dbReference type="ChEBI" id="CHEBI:57823"/>
        <dbReference type="ChEBI" id="CHEBI:58262"/>
        <dbReference type="EC" id="2.7.7.60"/>
    </reaction>
</comment>
<comment type="pathway">
    <text evidence="1">Isoprenoid biosynthesis; isopentenyl diphosphate biosynthesis via DXP pathway; isopentenyl diphosphate from 1-deoxy-D-xylulose 5-phosphate: step 2/6.</text>
</comment>
<comment type="similarity">
    <text evidence="1">Belongs to the IspD/TarI cytidylyltransferase family. IspD subfamily.</text>
</comment>
<sequence length="227" mass="23790">MSESLIAIVPAAGIGARASLPGEAAVPKQYRPLAGQPMLRHAVRALLADPRIVQVRVAVSAGDGWVEQALAGLPRTVWRPCGGPNRVDTVAAALADSGADADDWILVHDAARPGLPAAALARLIDACLDDAVGGLLALPVADTVKAGRQRVSRTVDRDGLWLAQTPQMFRAGLLRDALARARAAGLAVTDEASAVEAAGHAPRLVAGALRNFKVTWPDDFELMEKWL</sequence>
<proteinExistence type="inferred from homology"/>
<feature type="chain" id="PRO_0000075555" description="2-C-methyl-D-erythritol 4-phosphate cytidylyltransferase">
    <location>
        <begin position="1"/>
        <end position="227"/>
    </location>
</feature>
<feature type="site" description="Transition state stabilizer" evidence="1">
    <location>
        <position position="17"/>
    </location>
</feature>
<feature type="site" description="Transition state stabilizer" evidence="1">
    <location>
        <position position="28"/>
    </location>
</feature>
<feature type="site" description="Positions MEP for the nucleophilic attack" evidence="1">
    <location>
        <position position="157"/>
    </location>
</feature>
<feature type="site" description="Positions MEP for the nucleophilic attack" evidence="1">
    <location>
        <position position="213"/>
    </location>
</feature>
<reference key="1">
    <citation type="journal article" date="2003" name="Nat. Genet.">
        <title>Comparative analysis of the genome sequences of Bordetella pertussis, Bordetella parapertussis and Bordetella bronchiseptica.</title>
        <authorList>
            <person name="Parkhill J."/>
            <person name="Sebaihia M."/>
            <person name="Preston A."/>
            <person name="Murphy L.D."/>
            <person name="Thomson N.R."/>
            <person name="Harris D.E."/>
            <person name="Holden M.T.G."/>
            <person name="Churcher C.M."/>
            <person name="Bentley S.D."/>
            <person name="Mungall K.L."/>
            <person name="Cerdeno-Tarraga A.-M."/>
            <person name="Temple L."/>
            <person name="James K.D."/>
            <person name="Harris B."/>
            <person name="Quail M.A."/>
            <person name="Achtman M."/>
            <person name="Atkin R."/>
            <person name="Baker S."/>
            <person name="Basham D."/>
            <person name="Bason N."/>
            <person name="Cherevach I."/>
            <person name="Chillingworth T."/>
            <person name="Collins M."/>
            <person name="Cronin A."/>
            <person name="Davis P."/>
            <person name="Doggett J."/>
            <person name="Feltwell T."/>
            <person name="Goble A."/>
            <person name="Hamlin N."/>
            <person name="Hauser H."/>
            <person name="Holroyd S."/>
            <person name="Jagels K."/>
            <person name="Leather S."/>
            <person name="Moule S."/>
            <person name="Norberczak H."/>
            <person name="O'Neil S."/>
            <person name="Ormond D."/>
            <person name="Price C."/>
            <person name="Rabbinowitsch E."/>
            <person name="Rutter S."/>
            <person name="Sanders M."/>
            <person name="Saunders D."/>
            <person name="Seeger K."/>
            <person name="Sharp S."/>
            <person name="Simmonds M."/>
            <person name="Skelton J."/>
            <person name="Squares R."/>
            <person name="Squares S."/>
            <person name="Stevens K."/>
            <person name="Unwin L."/>
            <person name="Whitehead S."/>
            <person name="Barrell B.G."/>
            <person name="Maskell D.J."/>
        </authorList>
    </citation>
    <scope>NUCLEOTIDE SEQUENCE [LARGE SCALE GENOMIC DNA]</scope>
    <source>
        <strain>12822 / ATCC BAA-587 / NCTC 13253</strain>
    </source>
</reference>
<dbReference type="EC" id="2.7.7.60" evidence="1"/>
<dbReference type="EMBL" id="BX640433">
    <property type="protein sequence ID" value="CAE38651.1"/>
    <property type="molecule type" value="Genomic_DNA"/>
</dbReference>
<dbReference type="RefSeq" id="WP_010929024.1">
    <property type="nucleotide sequence ID" value="NC_002928.3"/>
</dbReference>
<dbReference type="SMR" id="Q7W5C9"/>
<dbReference type="GeneID" id="93205149"/>
<dbReference type="KEGG" id="bpa:BPP3366"/>
<dbReference type="HOGENOM" id="CLU_061281_3_0_4"/>
<dbReference type="UniPathway" id="UPA00056">
    <property type="reaction ID" value="UER00093"/>
</dbReference>
<dbReference type="Proteomes" id="UP000001421">
    <property type="component" value="Chromosome"/>
</dbReference>
<dbReference type="GO" id="GO:0050518">
    <property type="term" value="F:2-C-methyl-D-erythritol 4-phosphate cytidylyltransferase activity"/>
    <property type="evidence" value="ECO:0007669"/>
    <property type="project" value="UniProtKB-UniRule"/>
</dbReference>
<dbReference type="GO" id="GO:0019288">
    <property type="term" value="P:isopentenyl diphosphate biosynthetic process, methylerythritol 4-phosphate pathway"/>
    <property type="evidence" value="ECO:0007669"/>
    <property type="project" value="UniProtKB-UniRule"/>
</dbReference>
<dbReference type="CDD" id="cd02516">
    <property type="entry name" value="CDP-ME_synthetase"/>
    <property type="match status" value="1"/>
</dbReference>
<dbReference type="FunFam" id="3.90.550.10:FF:000003">
    <property type="entry name" value="2-C-methyl-D-erythritol 4-phosphate cytidylyltransferase"/>
    <property type="match status" value="1"/>
</dbReference>
<dbReference type="Gene3D" id="3.90.550.10">
    <property type="entry name" value="Spore Coat Polysaccharide Biosynthesis Protein SpsA, Chain A"/>
    <property type="match status" value="1"/>
</dbReference>
<dbReference type="HAMAP" id="MF_00108">
    <property type="entry name" value="IspD"/>
    <property type="match status" value="1"/>
</dbReference>
<dbReference type="InterPro" id="IPR001228">
    <property type="entry name" value="IspD"/>
</dbReference>
<dbReference type="InterPro" id="IPR034683">
    <property type="entry name" value="IspD/TarI"/>
</dbReference>
<dbReference type="InterPro" id="IPR050088">
    <property type="entry name" value="IspD/TarI_cytidylyltransf_bact"/>
</dbReference>
<dbReference type="InterPro" id="IPR018294">
    <property type="entry name" value="ISPD_synthase_CS"/>
</dbReference>
<dbReference type="InterPro" id="IPR029044">
    <property type="entry name" value="Nucleotide-diphossugar_trans"/>
</dbReference>
<dbReference type="NCBIfam" id="TIGR00453">
    <property type="entry name" value="ispD"/>
    <property type="match status" value="1"/>
</dbReference>
<dbReference type="PANTHER" id="PTHR32125">
    <property type="entry name" value="2-C-METHYL-D-ERYTHRITOL 4-PHOSPHATE CYTIDYLYLTRANSFERASE, CHLOROPLASTIC"/>
    <property type="match status" value="1"/>
</dbReference>
<dbReference type="PANTHER" id="PTHR32125:SF4">
    <property type="entry name" value="2-C-METHYL-D-ERYTHRITOL 4-PHOSPHATE CYTIDYLYLTRANSFERASE, CHLOROPLASTIC"/>
    <property type="match status" value="1"/>
</dbReference>
<dbReference type="Pfam" id="PF01128">
    <property type="entry name" value="IspD"/>
    <property type="match status" value="1"/>
</dbReference>
<dbReference type="SUPFAM" id="SSF53448">
    <property type="entry name" value="Nucleotide-diphospho-sugar transferases"/>
    <property type="match status" value="1"/>
</dbReference>
<dbReference type="PROSITE" id="PS01295">
    <property type="entry name" value="ISPD"/>
    <property type="match status" value="1"/>
</dbReference>
<keyword id="KW-0414">Isoprene biosynthesis</keyword>
<keyword id="KW-0548">Nucleotidyltransferase</keyword>
<keyword id="KW-0808">Transferase</keyword>